<accession>O22261</accession>
<accession>Q94JT4</accession>
<gene>
    <name type="primary">NDT1</name>
    <name type="synonym">NADT1</name>
    <name type="ordered locus">At2g47490</name>
    <name type="ORF">T30B22.21</name>
</gene>
<reference key="1">
    <citation type="journal article" date="2005" name="J. Biol. Chem.">
        <title>Folate metabolism in plants: an Arabidopsis homolog of the mammalian mitochondrial folate transporter mediates folate import into chloroplasts.</title>
        <authorList>
            <person name="Bedhomme M."/>
            <person name="Hoffmann M."/>
            <person name="McCarthy E.A."/>
            <person name="Gambonnet B."/>
            <person name="Moran R.G."/>
            <person name="Rebeille F."/>
            <person name="Ravanel S."/>
        </authorList>
    </citation>
    <scope>NUCLEOTIDE SEQUENCE [MRNA]</scope>
    <scope>FUNCTION</scope>
    <source>
        <strain>cv. Wassilewskija</strain>
    </source>
</reference>
<reference key="2">
    <citation type="journal article" date="2009" name="J. Biol. Chem.">
        <title>Molecular identification and functional characterization of Arabidopsis thaliana mitochondrial and chloroplastic NAD+ carrier proteins.</title>
        <authorList>
            <person name="Palmieri F."/>
            <person name="Rieder B."/>
            <person name="Ventrella A."/>
            <person name="Blanco E."/>
            <person name="Do P.T."/>
            <person name="Nunes-Nesi A."/>
            <person name="Trauth A.U."/>
            <person name="Fiermonte G."/>
            <person name="Tjaden J."/>
            <person name="Agrimi G."/>
            <person name="Kirchberger S."/>
            <person name="Paradies E."/>
            <person name="Fernie A.R."/>
            <person name="Neuhaus H.E."/>
        </authorList>
    </citation>
    <scope>NUCLEOTIDE SEQUENCE [MRNA]</scope>
    <scope>FUNCTION</scope>
    <scope>SUBSTRATE SPECIFICITY</scope>
    <scope>ACTIVITY REGULATION</scope>
    <scope>BIOPHYSICOCHEMICAL PROPERTIES</scope>
    <scope>SUBCELLULAR LOCATION</scope>
    <scope>TISSUE SPECIFICITY</scope>
</reference>
<reference key="3">
    <citation type="journal article" date="1999" name="Nature">
        <title>Sequence and analysis of chromosome 2 of the plant Arabidopsis thaliana.</title>
        <authorList>
            <person name="Lin X."/>
            <person name="Kaul S."/>
            <person name="Rounsley S.D."/>
            <person name="Shea T.P."/>
            <person name="Benito M.-I."/>
            <person name="Town C.D."/>
            <person name="Fujii C.Y."/>
            <person name="Mason T.M."/>
            <person name="Bowman C.L."/>
            <person name="Barnstead M.E."/>
            <person name="Feldblyum T.V."/>
            <person name="Buell C.R."/>
            <person name="Ketchum K.A."/>
            <person name="Lee J.J."/>
            <person name="Ronning C.M."/>
            <person name="Koo H.L."/>
            <person name="Moffat K.S."/>
            <person name="Cronin L.A."/>
            <person name="Shen M."/>
            <person name="Pai G."/>
            <person name="Van Aken S."/>
            <person name="Umayam L."/>
            <person name="Tallon L.J."/>
            <person name="Gill J.E."/>
            <person name="Adams M.D."/>
            <person name="Carrera A.J."/>
            <person name="Creasy T.H."/>
            <person name="Goodman H.M."/>
            <person name="Somerville C.R."/>
            <person name="Copenhaver G.P."/>
            <person name="Preuss D."/>
            <person name="Nierman W.C."/>
            <person name="White O."/>
            <person name="Eisen J.A."/>
            <person name="Salzberg S.L."/>
            <person name="Fraser C.M."/>
            <person name="Venter J.C."/>
        </authorList>
    </citation>
    <scope>NUCLEOTIDE SEQUENCE [LARGE SCALE GENOMIC DNA]</scope>
    <source>
        <strain>cv. Columbia</strain>
    </source>
</reference>
<reference key="4">
    <citation type="journal article" date="2017" name="Plant J.">
        <title>Araport11: a complete reannotation of the Arabidopsis thaliana reference genome.</title>
        <authorList>
            <person name="Cheng C.Y."/>
            <person name="Krishnakumar V."/>
            <person name="Chan A.P."/>
            <person name="Thibaud-Nissen F."/>
            <person name="Schobel S."/>
            <person name="Town C.D."/>
        </authorList>
    </citation>
    <scope>GENOME REANNOTATION</scope>
    <source>
        <strain>cv. Columbia</strain>
    </source>
</reference>
<reference key="5">
    <citation type="journal article" date="2003" name="Science">
        <title>Empirical analysis of transcriptional activity in the Arabidopsis genome.</title>
        <authorList>
            <person name="Yamada K."/>
            <person name="Lim J."/>
            <person name="Dale J.M."/>
            <person name="Chen H."/>
            <person name="Shinn P."/>
            <person name="Palm C.J."/>
            <person name="Southwick A.M."/>
            <person name="Wu H.C."/>
            <person name="Kim C.J."/>
            <person name="Nguyen M."/>
            <person name="Pham P.K."/>
            <person name="Cheuk R.F."/>
            <person name="Karlin-Newmann G."/>
            <person name="Liu S.X."/>
            <person name="Lam B."/>
            <person name="Sakano H."/>
            <person name="Wu T."/>
            <person name="Yu G."/>
            <person name="Miranda M."/>
            <person name="Quach H.L."/>
            <person name="Tripp M."/>
            <person name="Chang C.H."/>
            <person name="Lee J.M."/>
            <person name="Toriumi M.J."/>
            <person name="Chan M.M."/>
            <person name="Tang C.C."/>
            <person name="Onodera C.S."/>
            <person name="Deng J.M."/>
            <person name="Akiyama K."/>
            <person name="Ansari Y."/>
            <person name="Arakawa T."/>
            <person name="Banh J."/>
            <person name="Banno F."/>
            <person name="Bowser L."/>
            <person name="Brooks S.Y."/>
            <person name="Carninci P."/>
            <person name="Chao Q."/>
            <person name="Choy N."/>
            <person name="Enju A."/>
            <person name="Goldsmith A.D."/>
            <person name="Gurjal M."/>
            <person name="Hansen N.F."/>
            <person name="Hayashizaki Y."/>
            <person name="Johnson-Hopson C."/>
            <person name="Hsuan V.W."/>
            <person name="Iida K."/>
            <person name="Karnes M."/>
            <person name="Khan S."/>
            <person name="Koesema E."/>
            <person name="Ishida J."/>
            <person name="Jiang P.X."/>
            <person name="Jones T."/>
            <person name="Kawai J."/>
            <person name="Kamiya A."/>
            <person name="Meyers C."/>
            <person name="Nakajima M."/>
            <person name="Narusaka M."/>
            <person name="Seki M."/>
            <person name="Sakurai T."/>
            <person name="Satou M."/>
            <person name="Tamse R."/>
            <person name="Vaysberg M."/>
            <person name="Wallender E.K."/>
            <person name="Wong C."/>
            <person name="Yamamura Y."/>
            <person name="Yuan S."/>
            <person name="Shinozaki K."/>
            <person name="Davis R.W."/>
            <person name="Theologis A."/>
            <person name="Ecker J.R."/>
        </authorList>
    </citation>
    <scope>NUCLEOTIDE SEQUENCE [LARGE SCALE MRNA]</scope>
    <source>
        <strain>cv. Columbia</strain>
    </source>
</reference>
<reference key="6">
    <citation type="journal article" date="2009" name="DNA Res.">
        <title>Analysis of multiple occurrences of alternative splicing events in Arabidopsis thaliana using novel sequenced full-length cDNAs.</title>
        <authorList>
            <person name="Iida K."/>
            <person name="Fukami-Kobayashi K."/>
            <person name="Toyoda A."/>
            <person name="Sakaki Y."/>
            <person name="Kobayashi M."/>
            <person name="Seki M."/>
            <person name="Shinozaki K."/>
        </authorList>
    </citation>
    <scope>NUCLEOTIDE SEQUENCE [LARGE SCALE MRNA]</scope>
    <source>
        <strain>cv. Columbia</strain>
    </source>
</reference>
<reference key="7">
    <citation type="submission" date="2002-03" db="EMBL/GenBank/DDBJ databases">
        <title>Full-length cDNA from Arabidopsis thaliana.</title>
        <authorList>
            <person name="Brover V.V."/>
            <person name="Troukhan M.E."/>
            <person name="Alexandrov N.A."/>
            <person name="Lu Y.-P."/>
            <person name="Flavell R.B."/>
            <person name="Feldmann K.A."/>
        </authorList>
    </citation>
    <scope>NUCLEOTIDE SEQUENCE [LARGE SCALE MRNA]</scope>
</reference>
<organism>
    <name type="scientific">Arabidopsis thaliana</name>
    <name type="common">Mouse-ear cress</name>
    <dbReference type="NCBI Taxonomy" id="3702"/>
    <lineage>
        <taxon>Eukaryota</taxon>
        <taxon>Viridiplantae</taxon>
        <taxon>Streptophyta</taxon>
        <taxon>Embryophyta</taxon>
        <taxon>Tracheophyta</taxon>
        <taxon>Spermatophyta</taxon>
        <taxon>Magnoliopsida</taxon>
        <taxon>eudicotyledons</taxon>
        <taxon>Gunneridae</taxon>
        <taxon>Pentapetalae</taxon>
        <taxon>rosids</taxon>
        <taxon>malvids</taxon>
        <taxon>Brassicales</taxon>
        <taxon>Brassicaceae</taxon>
        <taxon>Camelineae</taxon>
        <taxon>Arabidopsis</taxon>
    </lineage>
</organism>
<dbReference type="EMBL" id="AJ871011">
    <property type="protein sequence ID" value="CAI38582.1"/>
    <property type="molecule type" value="mRNA"/>
</dbReference>
<dbReference type="EMBL" id="FM211595">
    <property type="protein sequence ID" value="CAR70090.1"/>
    <property type="molecule type" value="mRNA"/>
</dbReference>
<dbReference type="EMBL" id="AC002535">
    <property type="protein sequence ID" value="AAC62861.2"/>
    <property type="molecule type" value="Genomic_DNA"/>
</dbReference>
<dbReference type="EMBL" id="CP002685">
    <property type="protein sequence ID" value="AEC10850.1"/>
    <property type="molecule type" value="Genomic_DNA"/>
</dbReference>
<dbReference type="EMBL" id="AF372957">
    <property type="protein sequence ID" value="AAK50096.1"/>
    <property type="molecule type" value="mRNA"/>
</dbReference>
<dbReference type="EMBL" id="AY074833">
    <property type="protein sequence ID" value="AAL69531.1"/>
    <property type="molecule type" value="mRNA"/>
</dbReference>
<dbReference type="EMBL" id="AK316807">
    <property type="protein sequence ID" value="BAH19521.1"/>
    <property type="molecule type" value="mRNA"/>
</dbReference>
<dbReference type="EMBL" id="AY084889">
    <property type="protein sequence ID" value="AAM61452.1"/>
    <property type="molecule type" value="mRNA"/>
</dbReference>
<dbReference type="PIR" id="T00435">
    <property type="entry name" value="T00435"/>
</dbReference>
<dbReference type="RefSeq" id="NP_566102.1">
    <property type="nucleotide sequence ID" value="NM_130317.3"/>
</dbReference>
<dbReference type="SMR" id="O22261"/>
<dbReference type="FunCoup" id="O22261">
    <property type="interactions" value="412"/>
</dbReference>
<dbReference type="STRING" id="3702.O22261"/>
<dbReference type="TCDB" id="2.A.29.10.11">
    <property type="family name" value="the mitochondrial carrier (mc) family"/>
</dbReference>
<dbReference type="iPTMnet" id="O22261"/>
<dbReference type="PaxDb" id="3702-AT2G47490.1"/>
<dbReference type="ProteomicsDB" id="251106"/>
<dbReference type="EnsemblPlants" id="AT2G47490.1">
    <property type="protein sequence ID" value="AT2G47490.1"/>
    <property type="gene ID" value="AT2G47490"/>
</dbReference>
<dbReference type="GeneID" id="819362"/>
<dbReference type="Gramene" id="AT2G47490.1">
    <property type="protein sequence ID" value="AT2G47490.1"/>
    <property type="gene ID" value="AT2G47490"/>
</dbReference>
<dbReference type="KEGG" id="ath:AT2G47490"/>
<dbReference type="Araport" id="AT2G47490"/>
<dbReference type="TAIR" id="AT2G47490">
    <property type="gene designation" value="NDT1"/>
</dbReference>
<dbReference type="eggNOG" id="KOG0764">
    <property type="taxonomic scope" value="Eukaryota"/>
</dbReference>
<dbReference type="HOGENOM" id="CLU_015166_6_4_1"/>
<dbReference type="InParanoid" id="O22261"/>
<dbReference type="OMA" id="TTVWKHE"/>
<dbReference type="OrthoDB" id="10266426at2759"/>
<dbReference type="PhylomeDB" id="O22261"/>
<dbReference type="PRO" id="PR:O22261"/>
<dbReference type="Proteomes" id="UP000006548">
    <property type="component" value="Chromosome 2"/>
</dbReference>
<dbReference type="ExpressionAtlas" id="O22261">
    <property type="expression patterns" value="baseline and differential"/>
</dbReference>
<dbReference type="GO" id="GO:0031969">
    <property type="term" value="C:chloroplast membrane"/>
    <property type="evidence" value="ECO:0000314"/>
    <property type="project" value="TAIR"/>
</dbReference>
<dbReference type="GO" id="GO:0005739">
    <property type="term" value="C:mitochondrion"/>
    <property type="evidence" value="ECO:0000314"/>
    <property type="project" value="TAIR"/>
</dbReference>
<dbReference type="GO" id="GO:0015297">
    <property type="term" value="F:antiporter activity"/>
    <property type="evidence" value="ECO:0007669"/>
    <property type="project" value="UniProtKB-KW"/>
</dbReference>
<dbReference type="GO" id="GO:0051724">
    <property type="term" value="F:NAD transmembrane transporter activity"/>
    <property type="evidence" value="ECO:0000314"/>
    <property type="project" value="TAIR"/>
</dbReference>
<dbReference type="GO" id="GO:0043132">
    <property type="term" value="P:NAD transport"/>
    <property type="evidence" value="ECO:0000314"/>
    <property type="project" value="TAIR"/>
</dbReference>
<dbReference type="FunFam" id="1.50.40.10:FF:000081">
    <property type="entry name" value="NAD+ transporter"/>
    <property type="match status" value="1"/>
</dbReference>
<dbReference type="FunFam" id="1.50.40.10:FF:000105">
    <property type="entry name" value="Nicotinamide adenine dinucleotide transporter 1, chloroplastic"/>
    <property type="match status" value="1"/>
</dbReference>
<dbReference type="Gene3D" id="1.50.40.10">
    <property type="entry name" value="Mitochondrial carrier domain"/>
    <property type="match status" value="1"/>
</dbReference>
<dbReference type="InterPro" id="IPR002067">
    <property type="entry name" value="Mit_carrier"/>
</dbReference>
<dbReference type="InterPro" id="IPR018108">
    <property type="entry name" value="Mitochondrial_sb/sol_carrier"/>
</dbReference>
<dbReference type="InterPro" id="IPR023395">
    <property type="entry name" value="Mt_carrier_dom_sf"/>
</dbReference>
<dbReference type="InterPro" id="IPR044712">
    <property type="entry name" value="SLC25A32-like"/>
</dbReference>
<dbReference type="PANTHER" id="PTHR45683">
    <property type="entry name" value="MITOCHONDRIAL NICOTINAMIDE ADENINE DINUCLEOTIDE TRANSPORTER 1-RELATED-RELATED"/>
    <property type="match status" value="1"/>
</dbReference>
<dbReference type="Pfam" id="PF00153">
    <property type="entry name" value="Mito_carr"/>
    <property type="match status" value="3"/>
</dbReference>
<dbReference type="PRINTS" id="PR00926">
    <property type="entry name" value="MITOCARRIER"/>
</dbReference>
<dbReference type="SUPFAM" id="SSF103506">
    <property type="entry name" value="Mitochondrial carrier"/>
    <property type="match status" value="1"/>
</dbReference>
<dbReference type="PROSITE" id="PS50920">
    <property type="entry name" value="SOLCAR"/>
    <property type="match status" value="3"/>
</dbReference>
<keyword id="KW-0050">Antiport</keyword>
<keyword id="KW-0150">Chloroplast</keyword>
<keyword id="KW-0472">Membrane</keyword>
<keyword id="KW-0934">Plastid</keyword>
<keyword id="KW-1185">Reference proteome</keyword>
<keyword id="KW-0677">Repeat</keyword>
<keyword id="KW-0812">Transmembrane</keyword>
<keyword id="KW-1133">Transmembrane helix</keyword>
<keyword id="KW-0813">Transport</keyword>
<name>NDT1_ARATH</name>
<evidence type="ECO:0000255" key="1"/>
<evidence type="ECO:0000269" key="2">
    <source>
    </source>
</evidence>
<evidence type="ECO:0000269" key="3">
    <source>
    </source>
</evidence>
<evidence type="ECO:0000305" key="4"/>
<proteinExistence type="evidence at protein level"/>
<protein>
    <recommendedName>
        <fullName>Nicotinamide adenine dinucleotide transporter 1, chloroplastic</fullName>
        <shortName>AtNDT1</shortName>
    </recommendedName>
    <alternativeName>
        <fullName>NAD(+) transporter 1</fullName>
    </alternativeName>
</protein>
<feature type="chain" id="PRO_0000420695" description="Nicotinamide adenine dinucleotide transporter 1, chloroplastic">
    <location>
        <begin position="1"/>
        <end position="312"/>
    </location>
</feature>
<feature type="transmembrane region" description="Helical; Name=1" evidence="1">
    <location>
        <begin position="17"/>
        <end position="37"/>
    </location>
</feature>
<feature type="transmembrane region" description="Helical; Name=2" evidence="1">
    <location>
        <begin position="78"/>
        <end position="98"/>
    </location>
</feature>
<feature type="transmembrane region" description="Helical; Name=3" evidence="1">
    <location>
        <begin position="117"/>
        <end position="137"/>
    </location>
</feature>
<feature type="transmembrane region" description="Helical; Name=4" evidence="1">
    <location>
        <begin position="171"/>
        <end position="191"/>
    </location>
</feature>
<feature type="transmembrane region" description="Helical; Name=5" evidence="1">
    <location>
        <begin position="216"/>
        <end position="232"/>
    </location>
</feature>
<feature type="transmembrane region" description="Helical; Name=6" evidence="1">
    <location>
        <begin position="271"/>
        <end position="293"/>
    </location>
</feature>
<feature type="repeat" description="Solcar 1">
    <location>
        <begin position="11"/>
        <end position="103"/>
    </location>
</feature>
<feature type="repeat" description="Solcar 2">
    <location>
        <begin position="111"/>
        <end position="199"/>
    </location>
</feature>
<feature type="repeat" description="Solcar 3">
    <location>
        <begin position="211"/>
        <end position="299"/>
    </location>
</feature>
<comment type="function">
    <text evidence="2 3">Mediates the NAD(+) import into chloroplast. Favors the NAD(+)(in)/ADP or AMP(out) antiport exchange, but is also able to catalyze a low unidirectional transport (uniport) of NAD(+). Transports NAD(+), nicotinic acid adenine dinucleotide, nicotinamide mononucleotide, nicotinic acid mononucleotide, FAD, FMN, TTP, TDP, TMP, UTP, UDP, UMP, CTP, CDP, CMP, GTP, GDP, GMP, 3'-AMP, ATP, ADP, and AMP, has low transport activity with cAMP, pyrophosphate, NADH and alpha-NAD(+), and has no activity with NADP(+), NADPH, nicotinamide, nicotinic acid, adenosine, thiamine mono- or diphosphate, inorganic phosphate, CoA, folate, NaCl, malate, malonate, citrate, fumarate, aspartate, glutamate, S-adenosylmethionine, lysine, arginine, and ornithine.</text>
</comment>
<comment type="activity regulation">
    <text evidence="3">Inhibited by pyridoxal 5'-phosphate, bathophenanthroline, tannic acid, mersalyl, mercuric chloride, p-hydroxymercuribenzoate, p-hydroxymercuribenzoate sulfonate, bromocresol purple and N-ethylmaleimide.</text>
</comment>
<comment type="biophysicochemical properties">
    <kinetics>
        <KM evidence="3">0.24 mM for the NAD(+)/NAD(+) exchange</KM>
        <Vmax evidence="3">1.41 mmol/min/g enzyme for the NAD(+)/NAD(+) exchange</Vmax>
    </kinetics>
</comment>
<comment type="subcellular location">
    <subcellularLocation>
        <location evidence="4">Plastid</location>
        <location evidence="4">Chloroplast membrane</location>
        <topology evidence="4">Multi-pass membrane protein</topology>
    </subcellularLocation>
</comment>
<comment type="tissue specificity">
    <text evidence="3">Highly expressed in young leaf mesophyll cells, root tips and at the branches of adventitious roots. Low expression in all flower tissues and not detected in siliques and seeds.</text>
</comment>
<comment type="miscellaneous">
    <text>Appears to be a chloroplast envelope-located membrane protein lacking an N-terminal-located transit peptide.</text>
</comment>
<comment type="similarity">
    <text evidence="4">Belongs to the mitochondrial carrier (TC 2.A.29) family.</text>
</comment>
<sequence length="312" mass="33883">MSANSHPPNSKNVLCNAAAGAAAGVVAATFVCPLDVIKTRFQVHGLPKLGDANIKGSLIVGSLEQIFKREGMRGLYRGLSPTVMALLSNWAIYFTMYDQLKSFLCSNDHKLSVGANVLAASGAGAATTIATNPLWVVKTRLQTQGMRVGIVPYKSTFSALRRIAYEEGIRGLYSGLVPALAGISHVAIQFPTYEMIKVYLAKKGDKSVDNLNARDVAVASSIAKIFASTLTYPHEVVRARLQEQGHHSEKRYSGVRDCIKKVFEKDGFPGFYRGCATNLLRTTPAAVITFTSFEMVHRFLVTHIPSEQSSIL</sequence>